<accession>A0R2K8</accession>
<accession>I7G6Y4</accession>
<dbReference type="EC" id="2.4.1.-" evidence="6"/>
<dbReference type="EMBL" id="CP000480">
    <property type="protein sequence ID" value="ABK75499.1"/>
    <property type="status" value="ALT_INIT"/>
    <property type="molecule type" value="Genomic_DNA"/>
</dbReference>
<dbReference type="EMBL" id="CP001663">
    <property type="protein sequence ID" value="AFP41462.1"/>
    <property type="status" value="ALT_INIT"/>
    <property type="molecule type" value="Genomic_DNA"/>
</dbReference>
<dbReference type="RefSeq" id="YP_889396.1">
    <property type="nucleotide sequence ID" value="NC_008596.1"/>
</dbReference>
<dbReference type="STRING" id="246196.MSMEG_5149"/>
<dbReference type="CAZy" id="GT87">
    <property type="family name" value="Glycosyltransferase Family 87"/>
</dbReference>
<dbReference type="TCDB" id="9.B.142.17.7">
    <property type="family name" value="the integral membrane glycosyltransferase family 39 (gt39) family"/>
</dbReference>
<dbReference type="PaxDb" id="246196-MSMEI_5018"/>
<dbReference type="KEGG" id="msg:MSMEI_5018"/>
<dbReference type="KEGG" id="msm:MSMEG_5149"/>
<dbReference type="PATRIC" id="fig|246196.19.peg.5025"/>
<dbReference type="eggNOG" id="COG1051">
    <property type="taxonomic scope" value="Bacteria"/>
</dbReference>
<dbReference type="OrthoDB" id="9774600at2"/>
<dbReference type="UniPathway" id="UPA00949"/>
<dbReference type="Proteomes" id="UP000000757">
    <property type="component" value="Chromosome"/>
</dbReference>
<dbReference type="Proteomes" id="UP000006158">
    <property type="component" value="Chromosome"/>
</dbReference>
<dbReference type="GO" id="GO:0005886">
    <property type="term" value="C:plasma membrane"/>
    <property type="evidence" value="ECO:0007669"/>
    <property type="project" value="UniProtKB-SubCell"/>
</dbReference>
<dbReference type="GO" id="GO:0004377">
    <property type="term" value="F:GDP-Man:Man3GlcNAc2-PP-Dol alpha-1,2-mannosyltransferase activity"/>
    <property type="evidence" value="ECO:0000314"/>
    <property type="project" value="UniProtKB"/>
</dbReference>
<dbReference type="GO" id="GO:0043750">
    <property type="term" value="F:phosphatidylinositol alpha-mannosyltransferase activity"/>
    <property type="evidence" value="ECO:0000314"/>
    <property type="project" value="UniProtKB"/>
</dbReference>
<dbReference type="GO" id="GO:0009247">
    <property type="term" value="P:glycolipid biosynthetic process"/>
    <property type="evidence" value="ECO:0000314"/>
    <property type="project" value="UniProtKB"/>
</dbReference>
<dbReference type="GO" id="GO:0046488">
    <property type="term" value="P:phosphatidylinositol metabolic process"/>
    <property type="evidence" value="ECO:0007669"/>
    <property type="project" value="UniProtKB-UniPathway"/>
</dbReference>
<dbReference type="GO" id="GO:0008654">
    <property type="term" value="P:phospholipid biosynthetic process"/>
    <property type="evidence" value="ECO:0007669"/>
    <property type="project" value="UniProtKB-KW"/>
</dbReference>
<dbReference type="InterPro" id="IPR018584">
    <property type="entry name" value="GT87"/>
</dbReference>
<dbReference type="NCBIfam" id="NF009915">
    <property type="entry name" value="PRK13375.1"/>
    <property type="match status" value="1"/>
</dbReference>
<dbReference type="Pfam" id="PF09594">
    <property type="entry name" value="GT87"/>
    <property type="match status" value="1"/>
</dbReference>
<feature type="chain" id="PRO_0000393739" description="Polyprenol-phosphate-mannose-dependent alpha-(1-2)-phosphatidylinositol pentamannoside mannosyltransferase">
    <location>
        <begin position="1"/>
        <end position="410"/>
    </location>
</feature>
<feature type="transmembrane region" description="Helical" evidence="1">
    <location>
        <begin position="31"/>
        <end position="51"/>
    </location>
</feature>
<feature type="transmembrane region" description="Helical" evidence="1">
    <location>
        <begin position="96"/>
        <end position="116"/>
    </location>
</feature>
<feature type="transmembrane region" description="Helical" evidence="1">
    <location>
        <begin position="160"/>
        <end position="180"/>
    </location>
</feature>
<feature type="transmembrane region" description="Helical" evidence="1">
    <location>
        <begin position="188"/>
        <end position="208"/>
    </location>
</feature>
<feature type="transmembrane region" description="Helical" evidence="1">
    <location>
        <begin position="214"/>
        <end position="234"/>
    </location>
</feature>
<feature type="transmembrane region" description="Helical" evidence="1">
    <location>
        <begin position="276"/>
        <end position="296"/>
    </location>
</feature>
<feature type="transmembrane region" description="Helical" evidence="1">
    <location>
        <begin position="306"/>
        <end position="326"/>
    </location>
</feature>
<feature type="transmembrane region" description="Helical" evidence="1">
    <location>
        <begin position="328"/>
        <end position="348"/>
    </location>
</feature>
<feature type="transmembrane region" description="Helical" evidence="1">
    <location>
        <begin position="351"/>
        <end position="371"/>
    </location>
</feature>
<feature type="transmembrane region" description="Helical" evidence="1">
    <location>
        <begin position="384"/>
        <end position="404"/>
    </location>
</feature>
<feature type="mutagenesis site" description="Loss of mannosyltransferase activity." evidence="2">
    <original>D</original>
    <variation>A</variation>
    <location>
        <position position="58"/>
    </location>
</feature>
<feature type="mutagenesis site" description="No change in activity." evidence="2">
    <original>D</original>
    <variation>A</variation>
    <location>
        <position position="67"/>
    </location>
</feature>
<feature type="mutagenesis site" description="No change in activity." evidence="2">
    <original>D</original>
    <variation>A</variation>
    <location>
        <position position="70"/>
    </location>
</feature>
<feature type="mutagenesis site" description="No change in activity." evidence="2">
    <original>D</original>
    <variation>A</variation>
    <location>
        <position position="77"/>
    </location>
</feature>
<feature type="mutagenesis site" description="No change in activity." evidence="2">
    <original>D</original>
    <variation>A</variation>
    <location>
        <position position="82"/>
    </location>
</feature>
<feature type="mutagenesis site" description="No change in activity." evidence="2">
    <original>D</original>
    <variation>A</variation>
    <location>
        <position position="86"/>
    </location>
</feature>
<name>PIME_MYCS2</name>
<proteinExistence type="evidence at protein level"/>
<organism>
    <name type="scientific">Mycolicibacterium smegmatis (strain ATCC 700084 / mc(2)155)</name>
    <name type="common">Mycobacterium smegmatis</name>
    <dbReference type="NCBI Taxonomy" id="246196"/>
    <lineage>
        <taxon>Bacteria</taxon>
        <taxon>Bacillati</taxon>
        <taxon>Actinomycetota</taxon>
        <taxon>Actinomycetes</taxon>
        <taxon>Mycobacteriales</taxon>
        <taxon>Mycobacteriaceae</taxon>
        <taxon>Mycolicibacterium</taxon>
    </lineage>
</organism>
<gene>
    <name evidence="4" type="primary">pimE</name>
    <name type="ordered locus">MSMEG_5149</name>
    <name type="ordered locus">MSMEI_5018</name>
</gene>
<sequence>MRVNGYRGAKVGAVDTTSPPEVPASARLQRLAPMLLVVSILARLAWTYLVPNGANFVDLHVYVGGADALDGPGALYDYVYADQTPDFPLPFTYPPFAAIVFYPLHLLPFGVVAFIWQIGIIAALYGVVRVSQRLMGLQSQRRVAMLWTALGIWTEPLRSTFDYGQVNVVLVLAVLCAVSTTRWWLSGLLVGLAAGIKLTPAVAGLYFLGARRWAAVACSAAVFFATVGVSWLVVGAQARRYFTELLGDADRIGPIGTSFNQSWRGGISRILGHDAGFGPLVLIGIGITAVLALLAWRAIGGAQDRLGGILVVSLFGLVLSPISWTHHWVWLIPLMMWLLHGPLSALRGARILGWGWLALTLLGVPWLLSFAQPTIWEIGRPWYLAWAGLVYIVATLATLGWIAFSRKGSG</sequence>
<keyword id="KW-1003">Cell membrane</keyword>
<keyword id="KW-0444">Lipid biosynthesis</keyword>
<keyword id="KW-0443">Lipid metabolism</keyword>
<keyword id="KW-0472">Membrane</keyword>
<keyword id="KW-0594">Phospholipid biosynthesis</keyword>
<keyword id="KW-1208">Phospholipid metabolism</keyword>
<keyword id="KW-1185">Reference proteome</keyword>
<keyword id="KW-0808">Transferase</keyword>
<keyword id="KW-0812">Transmembrane</keyword>
<keyword id="KW-1133">Transmembrane helix</keyword>
<protein>
    <recommendedName>
        <fullName>Polyprenol-phosphate-mannose-dependent alpha-(1-2)-phosphatidylinositol pentamannoside mannosyltransferase</fullName>
        <ecNumber evidence="6">2.4.1.-</ecNumber>
    </recommendedName>
    <alternativeName>
        <fullName>Alpha-mannosyltransferase</fullName>
        <shortName>Alpha-ManT</shortName>
    </alternativeName>
    <alternativeName>
        <fullName evidence="4">PPM-dependent mannosyltransferase</fullName>
    </alternativeName>
    <alternativeName>
        <fullName>Polyprenol-phosphate-mannose alpha-mannosyltransferase</fullName>
        <shortName>PPM alpha-mannosyltransferase</shortName>
    </alternativeName>
</protein>
<comment type="function">
    <text evidence="2">Catalyzes the alpha-1,2 addition of a mannose residue from polyprenol-phosphate-mannose (PPM) to a monoacyl phosphatidylinositol tetramannoside (AcPIM4) to generate a monoacyl phosphatidylinositol pentamannoside (AcPIM5).</text>
</comment>
<comment type="pathway">
    <text evidence="2">Phospholipid metabolism; phosphatidylinositol metabolism.</text>
</comment>
<comment type="subcellular location">
    <subcellularLocation>
        <location evidence="2">Cell membrane</location>
        <topology evidence="1">Multi-pass membrane protein</topology>
    </subcellularLocation>
    <text evidence="2">Localizes in the plasma membrane-cell wall (PM-CW) fraction.</text>
</comment>
<comment type="disruption phenotype">
    <text evidence="2 3">Deletion of the gene leads to a striking defect in phosphatidylinositol mannoside (PIM) biosynthesis (PubMed:16803893). Deletion mutant is defective in AcPIM6 synthesis, and accumulates the tetramannosyl PIM, AcPIM4 (PubMed:16803893). Loss of the gene leads to changes in cell wall hydrophobicity and plasma membrane organization, but it has no effect on cell growth or viability, or the biosynthesis of other intracellular and cell wall glycans (PubMed:16803893). Deletion of the gene does not cause growth defects under optimal growth conditions, but makes the cell envelope vulnerable to toxic compounds such as copper and antibiotics (PubMed:29390083).</text>
</comment>
<comment type="similarity">
    <text evidence="5">Belongs to the glycosyltransferase 87 family.</text>
</comment>
<comment type="sequence caution" evidence="5">
    <conflict type="erroneous initiation">
        <sequence resource="EMBL-CDS" id="ABK75499"/>
    </conflict>
    <text>Truncated N-terminus.</text>
</comment>
<comment type="sequence caution" evidence="5">
    <conflict type="erroneous initiation">
        <sequence resource="EMBL-CDS" id="AFP41462"/>
    </conflict>
    <text>Extended N-terminus.</text>
</comment>
<evidence type="ECO:0000255" key="1"/>
<evidence type="ECO:0000269" key="2">
    <source>
    </source>
</evidence>
<evidence type="ECO:0000269" key="3">
    <source>
    </source>
</evidence>
<evidence type="ECO:0000303" key="4">
    <source>
    </source>
</evidence>
<evidence type="ECO:0000305" key="5"/>
<evidence type="ECO:0000305" key="6">
    <source>
    </source>
</evidence>
<reference key="1">
    <citation type="submission" date="2006-10" db="EMBL/GenBank/DDBJ databases">
        <authorList>
            <person name="Fleischmann R.D."/>
            <person name="Dodson R.J."/>
            <person name="Haft D.H."/>
            <person name="Merkel J.S."/>
            <person name="Nelson W.C."/>
            <person name="Fraser C.M."/>
        </authorList>
    </citation>
    <scope>NUCLEOTIDE SEQUENCE [LARGE SCALE GENOMIC DNA]</scope>
    <source>
        <strain>ATCC 700084 / mc(2)155</strain>
    </source>
</reference>
<reference key="2">
    <citation type="journal article" date="2007" name="Genome Biol.">
        <title>Interrupted coding sequences in Mycobacterium smegmatis: authentic mutations or sequencing errors?</title>
        <authorList>
            <person name="Deshayes C."/>
            <person name="Perrodou E."/>
            <person name="Gallien S."/>
            <person name="Euphrasie D."/>
            <person name="Schaeffer C."/>
            <person name="Van-Dorsselaer A."/>
            <person name="Poch O."/>
            <person name="Lecompte O."/>
            <person name="Reyrat J.-M."/>
        </authorList>
    </citation>
    <scope>NUCLEOTIDE SEQUENCE [LARGE SCALE GENOMIC DNA]</scope>
    <source>
        <strain>ATCC 700084 / mc(2)155</strain>
    </source>
</reference>
<reference key="3">
    <citation type="journal article" date="2009" name="Genome Res.">
        <title>Ortho-proteogenomics: multiple proteomes investigation through orthology and a new MS-based protocol.</title>
        <authorList>
            <person name="Gallien S."/>
            <person name="Perrodou E."/>
            <person name="Carapito C."/>
            <person name="Deshayes C."/>
            <person name="Reyrat J.-M."/>
            <person name="Van Dorsselaer A."/>
            <person name="Poch O."/>
            <person name="Schaeffer C."/>
            <person name="Lecompte O."/>
        </authorList>
    </citation>
    <scope>NUCLEOTIDE SEQUENCE [LARGE SCALE GENOMIC DNA]</scope>
    <source>
        <strain>ATCC 700084 / mc(2)155</strain>
    </source>
</reference>
<reference key="4">
    <citation type="journal article" date="2006" name="J. Biol. Chem.">
        <title>PimE is a polyprenol-phosphate-mannose-dependent mannosyltransferase that transfers the fifth mannose of phosphatidylinositol mannoside in mycobacteria.</title>
        <authorList>
            <person name="Morita Y.S."/>
            <person name="Sena C.B."/>
            <person name="Waller R.F."/>
            <person name="Kurokawa K."/>
            <person name="Sernee M.F."/>
            <person name="Nakatani F."/>
            <person name="Haites R.E."/>
            <person name="Billman-Jacobe H."/>
            <person name="McConville M.J."/>
            <person name="Maeda Y."/>
            <person name="Kinoshita T."/>
        </authorList>
    </citation>
    <scope>FUNCTION AS A MANNOSYLTRANSFERASE</scope>
    <scope>PATHWAY</scope>
    <scope>SUBCELLULAR LOCATION</scope>
    <scope>DISRUPTION PHENOTYPE</scope>
    <scope>MUTAGENESIS OF ASP-58; ASP-67; ASP-70; ASP-77; ASP-82 AND ASP-86</scope>
    <scope>NOMENCLATURE</scope>
</reference>
<reference key="5">
    <citation type="journal article" date="2018" name="FEMS Microbiol. Lett.">
        <title>Deletion of PimE mannosyltransferase results in increased copper sensitivity in Mycobacterium smegmatis.</title>
        <authorList>
            <person name="Eagen W.J."/>
            <person name="Baumoel L.R."/>
            <person name="Osman S.H."/>
            <person name="Rahlwes K.C."/>
            <person name="Morita Y.S."/>
        </authorList>
    </citation>
    <scope>DISRUPTION PHENOTYPE</scope>
    <source>
        <strain>ATCC 700084 / mc(2)155</strain>
    </source>
</reference>